<proteinExistence type="evidence at protein level"/>
<dbReference type="EMBL" id="AK034930">
    <property type="protein sequence ID" value="BAC28885.1"/>
    <property type="molecule type" value="mRNA"/>
</dbReference>
<dbReference type="EMBL" id="AK047285">
    <property type="protein sequence ID" value="BAC33015.1"/>
    <property type="status" value="ALT_FRAME"/>
    <property type="molecule type" value="mRNA"/>
</dbReference>
<dbReference type="EMBL" id="AK135995">
    <property type="protein sequence ID" value="BAE22766.1"/>
    <property type="molecule type" value="mRNA"/>
</dbReference>
<dbReference type="EMBL" id="AK141389">
    <property type="protein sequence ID" value="BAE24669.1"/>
    <property type="molecule type" value="mRNA"/>
</dbReference>
<dbReference type="EMBL" id="AK167430">
    <property type="protein sequence ID" value="BAE39518.1"/>
    <property type="molecule type" value="mRNA"/>
</dbReference>
<dbReference type="EMBL" id="BC052183">
    <property type="protein sequence ID" value="AAH52183.1"/>
    <property type="molecule type" value="mRNA"/>
</dbReference>
<dbReference type="CCDS" id="CCDS27309.1">
    <molecule id="Q8BS90-1"/>
</dbReference>
<dbReference type="RefSeq" id="NP_780474.1">
    <molecule id="Q8BS90-1"/>
    <property type="nucleotide sequence ID" value="NM_175265.6"/>
</dbReference>
<dbReference type="BioGRID" id="218887">
    <property type="interactions" value="1"/>
</dbReference>
<dbReference type="FunCoup" id="Q8BS90">
    <property type="interactions" value="2342"/>
</dbReference>
<dbReference type="STRING" id="10090.ENSMUSP00000022656"/>
<dbReference type="GlyGen" id="Q8BS90">
    <property type="glycosylation" value="2 sites, 1 O-linked glycan (1 site)"/>
</dbReference>
<dbReference type="iPTMnet" id="Q8BS90"/>
<dbReference type="PhosphoSitePlus" id="Q8BS90"/>
<dbReference type="PaxDb" id="10090-ENSMUSP00000022656"/>
<dbReference type="PeptideAtlas" id="Q8BS90"/>
<dbReference type="ProteomicsDB" id="273793">
    <molecule id="Q8BS90-1"/>
</dbReference>
<dbReference type="ProteomicsDB" id="273794">
    <molecule id="Q8BS90-2"/>
</dbReference>
<dbReference type="Antibodypedia" id="24385">
    <property type="antibodies" value="185 antibodies from 33 providers"/>
</dbReference>
<dbReference type="DNASU" id="77744"/>
<dbReference type="Ensembl" id="ENSMUST00000022656.8">
    <molecule id="Q8BS90-1"/>
    <property type="protein sequence ID" value="ENSMUSP00000022656.7"/>
    <property type="gene ID" value="ENSMUSG00000022070.8"/>
</dbReference>
<dbReference type="Ensembl" id="ENSMUST00000227744.2">
    <molecule id="Q8BS90-2"/>
    <property type="protein sequence ID" value="ENSMUSP00000154660.2"/>
    <property type="gene ID" value="ENSMUSG00000022070.8"/>
</dbReference>
<dbReference type="GeneID" id="77744"/>
<dbReference type="KEGG" id="mmu:77744"/>
<dbReference type="UCSC" id="uc007uuv.1">
    <molecule id="Q8BS90-1"/>
    <property type="organism name" value="mouse"/>
</dbReference>
<dbReference type="AGR" id="MGI:1924994"/>
<dbReference type="CTD" id="79866"/>
<dbReference type="MGI" id="MGI:1924994">
    <property type="gene designation" value="Bora"/>
</dbReference>
<dbReference type="VEuPathDB" id="HostDB:ENSMUSG00000022070"/>
<dbReference type="eggNOG" id="ENOG502S85H">
    <property type="taxonomic scope" value="Eukaryota"/>
</dbReference>
<dbReference type="GeneTree" id="ENSGT00390000013790"/>
<dbReference type="HOGENOM" id="CLU_038376_0_0_1"/>
<dbReference type="InParanoid" id="Q8BS90"/>
<dbReference type="OMA" id="STWIKEP"/>
<dbReference type="OrthoDB" id="10020858at2759"/>
<dbReference type="PhylomeDB" id="Q8BS90"/>
<dbReference type="TreeFam" id="TF329674"/>
<dbReference type="Reactome" id="R-MMU-2565942">
    <property type="pathway name" value="Regulation of PLK1 Activity at G2/M Transition"/>
</dbReference>
<dbReference type="BioGRID-ORCS" id="77744">
    <property type="hits" value="16 hits in 79 CRISPR screens"/>
</dbReference>
<dbReference type="ChiTaRS" id="Bora">
    <property type="organism name" value="mouse"/>
</dbReference>
<dbReference type="PRO" id="PR:Q8BS90"/>
<dbReference type="Proteomes" id="UP000000589">
    <property type="component" value="Chromosome 14"/>
</dbReference>
<dbReference type="RNAct" id="Q8BS90">
    <property type="molecule type" value="protein"/>
</dbReference>
<dbReference type="Bgee" id="ENSMUSG00000022070">
    <property type="expression patterns" value="Expressed in manus and 194 other cell types or tissues"/>
</dbReference>
<dbReference type="ExpressionAtlas" id="Q8BS90">
    <property type="expression patterns" value="baseline and differential"/>
</dbReference>
<dbReference type="GO" id="GO:0072687">
    <property type="term" value="C:meiotic spindle"/>
    <property type="evidence" value="ECO:0000314"/>
    <property type="project" value="MGI"/>
</dbReference>
<dbReference type="GO" id="GO:0019901">
    <property type="term" value="F:protein kinase binding"/>
    <property type="evidence" value="ECO:0007669"/>
    <property type="project" value="Ensembl"/>
</dbReference>
<dbReference type="GO" id="GO:0051301">
    <property type="term" value="P:cell division"/>
    <property type="evidence" value="ECO:0007669"/>
    <property type="project" value="UniProtKB-KW"/>
</dbReference>
<dbReference type="GO" id="GO:0007088">
    <property type="term" value="P:regulation of mitotic nuclear division"/>
    <property type="evidence" value="ECO:0000250"/>
    <property type="project" value="UniProtKB"/>
</dbReference>
<dbReference type="GO" id="GO:0060236">
    <property type="term" value="P:regulation of mitotic spindle organization"/>
    <property type="evidence" value="ECO:0000250"/>
    <property type="project" value="UniProtKB"/>
</dbReference>
<dbReference type="GO" id="GO:0032880">
    <property type="term" value="P:regulation of protein localization"/>
    <property type="evidence" value="ECO:0000250"/>
    <property type="project" value="UniProtKB"/>
</dbReference>
<dbReference type="InterPro" id="IPR023252">
    <property type="entry name" value="Aurora_borealis_protein"/>
</dbReference>
<dbReference type="PANTHER" id="PTHR14728">
    <property type="entry name" value="PROTEIN AURORA BOREALIS"/>
    <property type="match status" value="1"/>
</dbReference>
<dbReference type="PANTHER" id="PTHR14728:SF2">
    <property type="entry name" value="PROTEIN AURORA BOREALIS"/>
    <property type="match status" value="1"/>
</dbReference>
<dbReference type="Pfam" id="PF15280">
    <property type="entry name" value="BORA_N"/>
    <property type="match status" value="1"/>
</dbReference>
<dbReference type="PRINTS" id="PR02038">
    <property type="entry name" value="AURORABORA"/>
</dbReference>
<evidence type="ECO:0000250" key="1"/>
<evidence type="ECO:0000250" key="2">
    <source>
        <dbReference type="UniProtKB" id="Q6PGQ7"/>
    </source>
</evidence>
<evidence type="ECO:0000256" key="3">
    <source>
        <dbReference type="SAM" id="MobiDB-lite"/>
    </source>
</evidence>
<evidence type="ECO:0000303" key="4">
    <source>
    </source>
</evidence>
<evidence type="ECO:0000305" key="5"/>
<evidence type="ECO:0007744" key="6">
    <source>
    </source>
</evidence>
<evidence type="ECO:0007744" key="7">
    <source>
    </source>
</evidence>
<accession>Q8BS90</accession>
<accession>Q3TJH7</accession>
<accession>Q3UWZ8</accession>
<accession>Q80WQ5</accession>
<accession>Q8C8E9</accession>
<reference key="1">
    <citation type="journal article" date="2005" name="Science">
        <title>The transcriptional landscape of the mammalian genome.</title>
        <authorList>
            <person name="Carninci P."/>
            <person name="Kasukawa T."/>
            <person name="Katayama S."/>
            <person name="Gough J."/>
            <person name="Frith M.C."/>
            <person name="Maeda N."/>
            <person name="Oyama R."/>
            <person name="Ravasi T."/>
            <person name="Lenhard B."/>
            <person name="Wells C."/>
            <person name="Kodzius R."/>
            <person name="Shimokawa K."/>
            <person name="Bajic V.B."/>
            <person name="Brenner S.E."/>
            <person name="Batalov S."/>
            <person name="Forrest A.R."/>
            <person name="Zavolan M."/>
            <person name="Davis M.J."/>
            <person name="Wilming L.G."/>
            <person name="Aidinis V."/>
            <person name="Allen J.E."/>
            <person name="Ambesi-Impiombato A."/>
            <person name="Apweiler R."/>
            <person name="Aturaliya R.N."/>
            <person name="Bailey T.L."/>
            <person name="Bansal M."/>
            <person name="Baxter L."/>
            <person name="Beisel K.W."/>
            <person name="Bersano T."/>
            <person name="Bono H."/>
            <person name="Chalk A.M."/>
            <person name="Chiu K.P."/>
            <person name="Choudhary V."/>
            <person name="Christoffels A."/>
            <person name="Clutterbuck D.R."/>
            <person name="Crowe M.L."/>
            <person name="Dalla E."/>
            <person name="Dalrymple B.P."/>
            <person name="de Bono B."/>
            <person name="Della Gatta G."/>
            <person name="di Bernardo D."/>
            <person name="Down T."/>
            <person name="Engstrom P."/>
            <person name="Fagiolini M."/>
            <person name="Faulkner G."/>
            <person name="Fletcher C.F."/>
            <person name="Fukushima T."/>
            <person name="Furuno M."/>
            <person name="Futaki S."/>
            <person name="Gariboldi M."/>
            <person name="Georgii-Hemming P."/>
            <person name="Gingeras T.R."/>
            <person name="Gojobori T."/>
            <person name="Green R.E."/>
            <person name="Gustincich S."/>
            <person name="Harbers M."/>
            <person name="Hayashi Y."/>
            <person name="Hensch T.K."/>
            <person name="Hirokawa N."/>
            <person name="Hill D."/>
            <person name="Huminiecki L."/>
            <person name="Iacono M."/>
            <person name="Ikeo K."/>
            <person name="Iwama A."/>
            <person name="Ishikawa T."/>
            <person name="Jakt M."/>
            <person name="Kanapin A."/>
            <person name="Katoh M."/>
            <person name="Kawasawa Y."/>
            <person name="Kelso J."/>
            <person name="Kitamura H."/>
            <person name="Kitano H."/>
            <person name="Kollias G."/>
            <person name="Krishnan S.P."/>
            <person name="Kruger A."/>
            <person name="Kummerfeld S.K."/>
            <person name="Kurochkin I.V."/>
            <person name="Lareau L.F."/>
            <person name="Lazarevic D."/>
            <person name="Lipovich L."/>
            <person name="Liu J."/>
            <person name="Liuni S."/>
            <person name="McWilliam S."/>
            <person name="Madan Babu M."/>
            <person name="Madera M."/>
            <person name="Marchionni L."/>
            <person name="Matsuda H."/>
            <person name="Matsuzawa S."/>
            <person name="Miki H."/>
            <person name="Mignone F."/>
            <person name="Miyake S."/>
            <person name="Morris K."/>
            <person name="Mottagui-Tabar S."/>
            <person name="Mulder N."/>
            <person name="Nakano N."/>
            <person name="Nakauchi H."/>
            <person name="Ng P."/>
            <person name="Nilsson R."/>
            <person name="Nishiguchi S."/>
            <person name="Nishikawa S."/>
            <person name="Nori F."/>
            <person name="Ohara O."/>
            <person name="Okazaki Y."/>
            <person name="Orlando V."/>
            <person name="Pang K.C."/>
            <person name="Pavan W.J."/>
            <person name="Pavesi G."/>
            <person name="Pesole G."/>
            <person name="Petrovsky N."/>
            <person name="Piazza S."/>
            <person name="Reed J."/>
            <person name="Reid J.F."/>
            <person name="Ring B.Z."/>
            <person name="Ringwald M."/>
            <person name="Rost B."/>
            <person name="Ruan Y."/>
            <person name="Salzberg S.L."/>
            <person name="Sandelin A."/>
            <person name="Schneider C."/>
            <person name="Schoenbach C."/>
            <person name="Sekiguchi K."/>
            <person name="Semple C.A."/>
            <person name="Seno S."/>
            <person name="Sessa L."/>
            <person name="Sheng Y."/>
            <person name="Shibata Y."/>
            <person name="Shimada H."/>
            <person name="Shimada K."/>
            <person name="Silva D."/>
            <person name="Sinclair B."/>
            <person name="Sperling S."/>
            <person name="Stupka E."/>
            <person name="Sugiura K."/>
            <person name="Sultana R."/>
            <person name="Takenaka Y."/>
            <person name="Taki K."/>
            <person name="Tammoja K."/>
            <person name="Tan S.L."/>
            <person name="Tang S."/>
            <person name="Taylor M.S."/>
            <person name="Tegner J."/>
            <person name="Teichmann S.A."/>
            <person name="Ueda H.R."/>
            <person name="van Nimwegen E."/>
            <person name="Verardo R."/>
            <person name="Wei C.L."/>
            <person name="Yagi K."/>
            <person name="Yamanishi H."/>
            <person name="Zabarovsky E."/>
            <person name="Zhu S."/>
            <person name="Zimmer A."/>
            <person name="Hide W."/>
            <person name="Bult C."/>
            <person name="Grimmond S.M."/>
            <person name="Teasdale R.D."/>
            <person name="Liu E.T."/>
            <person name="Brusic V."/>
            <person name="Quackenbush J."/>
            <person name="Wahlestedt C."/>
            <person name="Mattick J.S."/>
            <person name="Hume D.A."/>
            <person name="Kai C."/>
            <person name="Sasaki D."/>
            <person name="Tomaru Y."/>
            <person name="Fukuda S."/>
            <person name="Kanamori-Katayama M."/>
            <person name="Suzuki M."/>
            <person name="Aoki J."/>
            <person name="Arakawa T."/>
            <person name="Iida J."/>
            <person name="Imamura K."/>
            <person name="Itoh M."/>
            <person name="Kato T."/>
            <person name="Kawaji H."/>
            <person name="Kawagashira N."/>
            <person name="Kawashima T."/>
            <person name="Kojima M."/>
            <person name="Kondo S."/>
            <person name="Konno H."/>
            <person name="Nakano K."/>
            <person name="Ninomiya N."/>
            <person name="Nishio T."/>
            <person name="Okada M."/>
            <person name="Plessy C."/>
            <person name="Shibata K."/>
            <person name="Shiraki T."/>
            <person name="Suzuki S."/>
            <person name="Tagami M."/>
            <person name="Waki K."/>
            <person name="Watahiki A."/>
            <person name="Okamura-Oho Y."/>
            <person name="Suzuki H."/>
            <person name="Kawai J."/>
            <person name="Hayashizaki Y."/>
        </authorList>
    </citation>
    <scope>NUCLEOTIDE SEQUENCE [LARGE SCALE MRNA] (ISOFORM 1)</scope>
    <source>
        <strain>C57BL/6J</strain>
        <tissue>Cerebellum</tissue>
        <tissue>Egg</tissue>
        <tissue>Embryo</tissue>
        <tissue>Liver</tissue>
    </source>
</reference>
<reference key="2">
    <citation type="journal article" date="2004" name="Genome Res.">
        <title>The status, quality, and expansion of the NIH full-length cDNA project: the Mammalian Gene Collection (MGC).</title>
        <authorList>
            <consortium name="The MGC Project Team"/>
        </authorList>
    </citation>
    <scope>NUCLEOTIDE SEQUENCE [LARGE SCALE MRNA] (ISOFORM 2)</scope>
    <source>
        <tissue>Embryo</tissue>
    </source>
</reference>
<reference key="3">
    <citation type="journal article" date="2010" name="Cell">
        <title>A tissue-specific atlas of mouse protein phosphorylation and expression.</title>
        <authorList>
            <person name="Huttlin E.L."/>
            <person name="Jedrychowski M.P."/>
            <person name="Elias J.E."/>
            <person name="Goswami T."/>
            <person name="Rad R."/>
            <person name="Beausoleil S.A."/>
            <person name="Villen J."/>
            <person name="Haas W."/>
            <person name="Sowa M.E."/>
            <person name="Gygi S.P."/>
        </authorList>
    </citation>
    <scope>PHOSPHORYLATION [LARGE SCALE ANALYSIS] AT SER-305; SER-311 AND THR-331</scope>
    <scope>IDENTIFICATION BY MASS SPECTROMETRY [LARGE SCALE ANALYSIS]</scope>
    <source>
        <tissue>Spleen</tissue>
    </source>
</reference>
<reference key="4">
    <citation type="journal article" date="2014" name="Mol. Cell. Proteomics">
        <title>Immunoaffinity enrichment and mass spectrometry analysis of protein methylation.</title>
        <authorList>
            <person name="Guo A."/>
            <person name="Gu H."/>
            <person name="Zhou J."/>
            <person name="Mulhern D."/>
            <person name="Wang Y."/>
            <person name="Lee K.A."/>
            <person name="Yang V."/>
            <person name="Aguiar M."/>
            <person name="Kornhauser J."/>
            <person name="Jia X."/>
            <person name="Ren J."/>
            <person name="Beausoleil S.A."/>
            <person name="Silva J.C."/>
            <person name="Vemulapalli V."/>
            <person name="Bedford M.T."/>
            <person name="Comb M.J."/>
        </authorList>
    </citation>
    <scope>METHYLATION [LARGE SCALE ANALYSIS] AT ARG-316</scope>
    <scope>IDENTIFICATION BY MASS SPECTROMETRY [LARGE SCALE ANALYSIS]</scope>
    <source>
        <tissue>Embryo</tissue>
    </source>
</reference>
<keyword id="KW-0025">Alternative splicing</keyword>
<keyword id="KW-0131">Cell cycle</keyword>
<keyword id="KW-0132">Cell division</keyword>
<keyword id="KW-0488">Methylation</keyword>
<keyword id="KW-0498">Mitosis</keyword>
<keyword id="KW-0597">Phosphoprotein</keyword>
<keyword id="KW-1185">Reference proteome</keyword>
<sequence>MGDVSELKMQITPETPGRIPVLNPFESPSDYSNLHEQTLASPSIFKSTKLPTPGKFRWSIDQLAIINPVEIDPEEIHRQASYLRLSRIDKDVEDKRQKAIEEFFTKDVIVPSPWTDHDGKQPSELHPSKCLSSHDDSPDGKKPSLPSQKCNAACQTLLSLPVDFNLEAILGDYFREEDFVAHTPGNLSSSSLRRKLFLDGNGSICDPLPSPSPGSPPCSARGSLEGQFSSSPIQNSVKKYSLGSVTTSPSAISSPTFSPIALQGGKTPLSEPRKLTFHSPEASCATASTGIVNPSIRSPYIDGCSPIKNWSPRRLRGGPQCLSSLVRIPFTLEAHSEDEEADVSCTGAAPLSTNACGEPRVVTAMSVTQSHSGIAEKERAVLDDAESERENDTVDMVDPTDTVAESTWIKEPVDDGNSPMTDSASGIAFSIENSHMCMSPLAESSVLPYESSAIQMNSDYNTQTCVSNITDIVGTERYCKENVTHTNVPVPFEVEMKSQVNNVTPGHTAQRCWMKSPRPSQCSRP</sequence>
<name>BORA_MOUSE</name>
<gene>
    <name type="primary">Bora</name>
</gene>
<feature type="chain" id="PRO_0000273206" description="Protein aurora borealis">
    <location>
        <begin position="1"/>
        <end position="525"/>
    </location>
</feature>
<feature type="region of interest" description="Disordered" evidence="3">
    <location>
        <begin position="114"/>
        <end position="146"/>
    </location>
</feature>
<feature type="region of interest" description="Disordered" evidence="3">
    <location>
        <begin position="505"/>
        <end position="525"/>
    </location>
</feature>
<feature type="compositionally biased region" description="Basic and acidic residues" evidence="3">
    <location>
        <begin position="115"/>
        <end position="142"/>
    </location>
</feature>
<feature type="modified residue" description="Phosphoserine" evidence="2">
    <location>
        <position position="191"/>
    </location>
</feature>
<feature type="modified residue" description="Phosphoserine" evidence="2">
    <location>
        <position position="250"/>
    </location>
</feature>
<feature type="modified residue" description="Phosphoserine" evidence="6">
    <location>
        <position position="305"/>
    </location>
</feature>
<feature type="modified residue" description="Phosphoserine" evidence="6">
    <location>
        <position position="311"/>
    </location>
</feature>
<feature type="modified residue" description="Omega-N-methylarginine" evidence="7">
    <location>
        <position position="316"/>
    </location>
</feature>
<feature type="modified residue" description="Phosphothreonine" evidence="6">
    <location>
        <position position="331"/>
    </location>
</feature>
<feature type="splice variant" id="VSP_022496" description="In isoform 2." evidence="4">
    <original>EPR</original>
    <variation>GQI</variation>
    <location>
        <begin position="271"/>
        <end position="273"/>
    </location>
</feature>
<feature type="splice variant" id="VSP_022497" description="In isoform 2." evidence="4">
    <location>
        <begin position="274"/>
        <end position="525"/>
    </location>
</feature>
<feature type="sequence conflict" description="In Ref. 1; BAE39518." evidence="5" ref="1">
    <location>
        <position position="481"/>
    </location>
</feature>
<protein>
    <recommendedName>
        <fullName>Protein aurora borealis</fullName>
    </recommendedName>
</protein>
<comment type="function">
    <text evidence="1">Required for the activation of AURKA at the onset of mitosis.</text>
</comment>
<comment type="subunit">
    <text evidence="1">Interacts with AURKA.</text>
</comment>
<comment type="alternative products">
    <event type="alternative splicing"/>
    <isoform>
        <id>Q8BS90-1</id>
        <name>1</name>
        <sequence type="displayed"/>
    </isoform>
    <isoform>
        <id>Q8BS90-2</id>
        <name>2</name>
        <sequence type="described" ref="VSP_022496 VSP_022497"/>
    </isoform>
</comment>
<comment type="PTM">
    <text evidence="1">Phosphorylated by AURKA.</text>
</comment>
<comment type="similarity">
    <text evidence="5">Belongs to the BORA family.</text>
</comment>
<comment type="sequence caution" evidence="5">
    <conflict type="frameshift">
        <sequence resource="EMBL-CDS" id="BAC33015"/>
    </conflict>
</comment>
<organism>
    <name type="scientific">Mus musculus</name>
    <name type="common">Mouse</name>
    <dbReference type="NCBI Taxonomy" id="10090"/>
    <lineage>
        <taxon>Eukaryota</taxon>
        <taxon>Metazoa</taxon>
        <taxon>Chordata</taxon>
        <taxon>Craniata</taxon>
        <taxon>Vertebrata</taxon>
        <taxon>Euteleostomi</taxon>
        <taxon>Mammalia</taxon>
        <taxon>Eutheria</taxon>
        <taxon>Euarchontoglires</taxon>
        <taxon>Glires</taxon>
        <taxon>Rodentia</taxon>
        <taxon>Myomorpha</taxon>
        <taxon>Muroidea</taxon>
        <taxon>Muridae</taxon>
        <taxon>Murinae</taxon>
        <taxon>Mus</taxon>
        <taxon>Mus</taxon>
    </lineage>
</organism>